<sequence>MTITGIIAEFNPFHNGHKYLLDQAEGLKIVAMSGNFMQRGEPAIVDKWTRAQMALENGADLVVELPFLVSVQAADFFGQGAVDILDRLGIDSLVFGTEEVRDYQKIADLYTEKGTEMEKFVENLPDSLSYPQKTQAMWKEFAGLDFSGNTPNHVLALAYAKAVAGRNIKLHPIQRQGAGYHSVNKDVDFASATALRQHQKDQDFLERFMPSVALFEQASKVIWEDYFPLLRYQILSNPDLTTIYQVNQEMAVRIKEAIKTAQSVEELVELVTTKRYTKARVRRLLSYILAQARENVLPEAIHVLGFTEKGRQHLKSLKGQVSLVSRIGKEPWDAMTQKADQIYQLGNLSIAQQNFGRVPIRIETN</sequence>
<organism>
    <name type="scientific">Streptococcus pneumoniae (strain ATCC 700669 / Spain 23F-1)</name>
    <dbReference type="NCBI Taxonomy" id="561276"/>
    <lineage>
        <taxon>Bacteria</taxon>
        <taxon>Bacillati</taxon>
        <taxon>Bacillota</taxon>
        <taxon>Bacilli</taxon>
        <taxon>Lactobacillales</taxon>
        <taxon>Streptococcaceae</taxon>
        <taxon>Streptococcus</taxon>
    </lineage>
</organism>
<proteinExistence type="inferred from homology"/>
<keyword id="KW-0067">ATP-binding</keyword>
<keyword id="KW-0963">Cytoplasm</keyword>
<keyword id="KW-0436">Ligase</keyword>
<keyword id="KW-0547">Nucleotide-binding</keyword>
<keyword id="KW-0694">RNA-binding</keyword>
<keyword id="KW-0819">tRNA processing</keyword>
<keyword id="KW-0820">tRNA-binding</keyword>
<protein>
    <recommendedName>
        <fullName evidence="1">tRNA(Met) cytidine acetate ligase</fullName>
        <ecNumber evidence="1">6.3.4.-</ecNumber>
    </recommendedName>
</protein>
<feature type="chain" id="PRO_1000185223" description="tRNA(Met) cytidine acetate ligase">
    <location>
        <begin position="1"/>
        <end position="365"/>
    </location>
</feature>
<feature type="binding site" evidence="1">
    <location>
        <begin position="7"/>
        <end position="20"/>
    </location>
    <ligand>
        <name>ATP</name>
        <dbReference type="ChEBI" id="CHEBI:30616"/>
    </ligand>
</feature>
<feature type="binding site" evidence="1">
    <location>
        <position position="96"/>
    </location>
    <ligand>
        <name>ATP</name>
        <dbReference type="ChEBI" id="CHEBI:30616"/>
    </ligand>
</feature>
<feature type="binding site" evidence="1">
    <location>
        <position position="152"/>
    </location>
    <ligand>
        <name>ATP</name>
        <dbReference type="ChEBI" id="CHEBI:30616"/>
    </ligand>
</feature>
<feature type="binding site" evidence="1">
    <location>
        <position position="175"/>
    </location>
    <ligand>
        <name>ATP</name>
        <dbReference type="ChEBI" id="CHEBI:30616"/>
    </ligand>
</feature>
<reference key="1">
    <citation type="journal article" date="2009" name="J. Bacteriol.">
        <title>Role of conjugative elements in the evolution of the multidrug-resistant pandemic clone Streptococcus pneumoniae Spain23F ST81.</title>
        <authorList>
            <person name="Croucher N.J."/>
            <person name="Walker D."/>
            <person name="Romero P."/>
            <person name="Lennard N."/>
            <person name="Paterson G.K."/>
            <person name="Bason N.C."/>
            <person name="Mitchell A.M."/>
            <person name="Quail M.A."/>
            <person name="Andrew P.W."/>
            <person name="Parkhill J."/>
            <person name="Bentley S.D."/>
            <person name="Mitchell T.J."/>
        </authorList>
    </citation>
    <scope>NUCLEOTIDE SEQUENCE [LARGE SCALE GENOMIC DNA]</scope>
    <source>
        <strain>ATCC 700669 / Spain 23F-1</strain>
    </source>
</reference>
<dbReference type="EC" id="6.3.4.-" evidence="1"/>
<dbReference type="EMBL" id="FM211187">
    <property type="protein sequence ID" value="CAR69515.1"/>
    <property type="molecule type" value="Genomic_DNA"/>
</dbReference>
<dbReference type="RefSeq" id="WP_000156346.1">
    <property type="nucleotide sequence ID" value="NC_011900.1"/>
</dbReference>
<dbReference type="SMR" id="B8ZMR7"/>
<dbReference type="KEGG" id="sne:SPN23F17490"/>
<dbReference type="HOGENOM" id="CLU_038915_0_2_9"/>
<dbReference type="GO" id="GO:0005737">
    <property type="term" value="C:cytoplasm"/>
    <property type="evidence" value="ECO:0007669"/>
    <property type="project" value="UniProtKB-SubCell"/>
</dbReference>
<dbReference type="GO" id="GO:0005524">
    <property type="term" value="F:ATP binding"/>
    <property type="evidence" value="ECO:0007669"/>
    <property type="project" value="UniProtKB-KW"/>
</dbReference>
<dbReference type="GO" id="GO:0016879">
    <property type="term" value="F:ligase activity, forming carbon-nitrogen bonds"/>
    <property type="evidence" value="ECO:0007669"/>
    <property type="project" value="UniProtKB-UniRule"/>
</dbReference>
<dbReference type="GO" id="GO:0000049">
    <property type="term" value="F:tRNA binding"/>
    <property type="evidence" value="ECO:0007669"/>
    <property type="project" value="UniProtKB-KW"/>
</dbReference>
<dbReference type="GO" id="GO:0006400">
    <property type="term" value="P:tRNA modification"/>
    <property type="evidence" value="ECO:0007669"/>
    <property type="project" value="UniProtKB-UniRule"/>
</dbReference>
<dbReference type="Gene3D" id="3.40.50.620">
    <property type="entry name" value="HUPs"/>
    <property type="match status" value="1"/>
</dbReference>
<dbReference type="HAMAP" id="MF_01539">
    <property type="entry name" value="TmcAL"/>
    <property type="match status" value="1"/>
</dbReference>
<dbReference type="InterPro" id="IPR014729">
    <property type="entry name" value="Rossmann-like_a/b/a_fold"/>
</dbReference>
<dbReference type="InterPro" id="IPR008513">
    <property type="entry name" value="tRNA(Met)_cyd_acetate_ligase"/>
</dbReference>
<dbReference type="NCBIfam" id="NF010191">
    <property type="entry name" value="PRK13670.1"/>
    <property type="match status" value="1"/>
</dbReference>
<dbReference type="PANTHER" id="PTHR37825">
    <property type="entry name" value="TRNA(MET) CYTIDINE ACETATE LIGASE"/>
    <property type="match status" value="1"/>
</dbReference>
<dbReference type="PANTHER" id="PTHR37825:SF1">
    <property type="entry name" value="TRNA(MET) CYTIDINE ACETATE LIGASE"/>
    <property type="match status" value="1"/>
</dbReference>
<dbReference type="Pfam" id="PF05636">
    <property type="entry name" value="HIGH_NTase1"/>
    <property type="match status" value="1"/>
</dbReference>
<dbReference type="SUPFAM" id="SSF52374">
    <property type="entry name" value="Nucleotidylyl transferase"/>
    <property type="match status" value="1"/>
</dbReference>
<name>TMCAL_STRPJ</name>
<evidence type="ECO:0000255" key="1">
    <source>
        <dbReference type="HAMAP-Rule" id="MF_01539"/>
    </source>
</evidence>
<comment type="function">
    <text evidence="1">Catalyzes the formation of N(4)-acetylcytidine (ac(4)C) at the wobble position of elongator tRNA(Met), using acetate and ATP as substrates. First activates an acetate ion to form acetyladenylate (Ac-AMP) and then transfers the acetyl group to tRNA to form ac(4)C34.</text>
</comment>
<comment type="catalytic activity">
    <reaction evidence="1">
        <text>cytidine(34) in elongator tRNA(Met) + acetate + ATP = N(4)-acetylcytidine(34) in elongator tRNA(Met) + AMP + diphosphate</text>
        <dbReference type="Rhea" id="RHEA:58144"/>
        <dbReference type="Rhea" id="RHEA-COMP:10693"/>
        <dbReference type="Rhea" id="RHEA-COMP:10694"/>
        <dbReference type="ChEBI" id="CHEBI:30089"/>
        <dbReference type="ChEBI" id="CHEBI:30616"/>
        <dbReference type="ChEBI" id="CHEBI:33019"/>
        <dbReference type="ChEBI" id="CHEBI:74900"/>
        <dbReference type="ChEBI" id="CHEBI:82748"/>
        <dbReference type="ChEBI" id="CHEBI:456215"/>
    </reaction>
</comment>
<comment type="subcellular location">
    <subcellularLocation>
        <location evidence="1">Cytoplasm</location>
    </subcellularLocation>
</comment>
<comment type="similarity">
    <text evidence="1">Belongs to the TmcAL family.</text>
</comment>
<gene>
    <name evidence="1" type="primary">tmcAL</name>
    <name type="ordered locus">SPN23F17490</name>
</gene>
<accession>B8ZMR7</accession>